<dbReference type="EMBL" id="CP000606">
    <property type="protein sequence ID" value="ABO24180.1"/>
    <property type="molecule type" value="Genomic_DNA"/>
</dbReference>
<dbReference type="RefSeq" id="WP_011866111.1">
    <property type="nucleotide sequence ID" value="NC_009092.1"/>
</dbReference>
<dbReference type="SMR" id="A3QFD2"/>
<dbReference type="STRING" id="323850.Shew_2314"/>
<dbReference type="KEGG" id="slo:Shew_2314"/>
<dbReference type="eggNOG" id="COG1076">
    <property type="taxonomic scope" value="Bacteria"/>
</dbReference>
<dbReference type="HOGENOM" id="CLU_068529_2_0_6"/>
<dbReference type="OrthoDB" id="287587at2"/>
<dbReference type="Proteomes" id="UP000001558">
    <property type="component" value="Chromosome"/>
</dbReference>
<dbReference type="GO" id="GO:1990230">
    <property type="term" value="C:iron-sulfur cluster transfer complex"/>
    <property type="evidence" value="ECO:0007669"/>
    <property type="project" value="TreeGrafter"/>
</dbReference>
<dbReference type="GO" id="GO:0001671">
    <property type="term" value="F:ATPase activator activity"/>
    <property type="evidence" value="ECO:0007669"/>
    <property type="project" value="InterPro"/>
</dbReference>
<dbReference type="GO" id="GO:0051087">
    <property type="term" value="F:protein-folding chaperone binding"/>
    <property type="evidence" value="ECO:0007669"/>
    <property type="project" value="InterPro"/>
</dbReference>
<dbReference type="GO" id="GO:0044571">
    <property type="term" value="P:[2Fe-2S] cluster assembly"/>
    <property type="evidence" value="ECO:0007669"/>
    <property type="project" value="InterPro"/>
</dbReference>
<dbReference type="GO" id="GO:0051259">
    <property type="term" value="P:protein complex oligomerization"/>
    <property type="evidence" value="ECO:0007669"/>
    <property type="project" value="InterPro"/>
</dbReference>
<dbReference type="GO" id="GO:0006457">
    <property type="term" value="P:protein folding"/>
    <property type="evidence" value="ECO:0007669"/>
    <property type="project" value="UniProtKB-UniRule"/>
</dbReference>
<dbReference type="CDD" id="cd06257">
    <property type="entry name" value="DnaJ"/>
    <property type="match status" value="1"/>
</dbReference>
<dbReference type="Gene3D" id="1.10.287.110">
    <property type="entry name" value="DnaJ domain"/>
    <property type="match status" value="1"/>
</dbReference>
<dbReference type="Gene3D" id="1.20.1280.20">
    <property type="entry name" value="HscB, C-terminal domain"/>
    <property type="match status" value="1"/>
</dbReference>
<dbReference type="HAMAP" id="MF_00682">
    <property type="entry name" value="HscB"/>
    <property type="match status" value="1"/>
</dbReference>
<dbReference type="InterPro" id="IPR001623">
    <property type="entry name" value="DnaJ_domain"/>
</dbReference>
<dbReference type="InterPro" id="IPR004640">
    <property type="entry name" value="HscB"/>
</dbReference>
<dbReference type="InterPro" id="IPR036386">
    <property type="entry name" value="HscB_C_sf"/>
</dbReference>
<dbReference type="InterPro" id="IPR009073">
    <property type="entry name" value="HscB_oligo_C"/>
</dbReference>
<dbReference type="InterPro" id="IPR036869">
    <property type="entry name" value="J_dom_sf"/>
</dbReference>
<dbReference type="NCBIfam" id="TIGR00714">
    <property type="entry name" value="hscB"/>
    <property type="match status" value="1"/>
</dbReference>
<dbReference type="NCBIfam" id="NF003449">
    <property type="entry name" value="PRK05014.1"/>
    <property type="match status" value="1"/>
</dbReference>
<dbReference type="PANTHER" id="PTHR14021">
    <property type="entry name" value="IRON-SULFUR CLUSTER CO-CHAPERONE PROTEIN HSCB"/>
    <property type="match status" value="1"/>
</dbReference>
<dbReference type="PANTHER" id="PTHR14021:SF15">
    <property type="entry name" value="IRON-SULFUR CLUSTER CO-CHAPERONE PROTEIN HSCB"/>
    <property type="match status" value="1"/>
</dbReference>
<dbReference type="Pfam" id="PF07743">
    <property type="entry name" value="HSCB_C"/>
    <property type="match status" value="1"/>
</dbReference>
<dbReference type="SMART" id="SM00271">
    <property type="entry name" value="DnaJ"/>
    <property type="match status" value="1"/>
</dbReference>
<dbReference type="SUPFAM" id="SSF46565">
    <property type="entry name" value="Chaperone J-domain"/>
    <property type="match status" value="1"/>
</dbReference>
<dbReference type="SUPFAM" id="SSF47144">
    <property type="entry name" value="HSC20 (HSCB), C-terminal oligomerisation domain"/>
    <property type="match status" value="1"/>
</dbReference>
<dbReference type="PROSITE" id="PS50076">
    <property type="entry name" value="DNAJ_2"/>
    <property type="match status" value="1"/>
</dbReference>
<gene>
    <name evidence="1" type="primary">hscB</name>
    <name type="ordered locus">Shew_2314</name>
</gene>
<accession>A3QFD2</accession>
<feature type="chain" id="PRO_1000083040" description="Co-chaperone protein HscB homolog">
    <location>
        <begin position="1"/>
        <end position="173"/>
    </location>
</feature>
<feature type="domain" description="J" evidence="1">
    <location>
        <begin position="2"/>
        <end position="74"/>
    </location>
</feature>
<evidence type="ECO:0000255" key="1">
    <source>
        <dbReference type="HAMAP-Rule" id="MF_00682"/>
    </source>
</evidence>
<protein>
    <recommendedName>
        <fullName evidence="1">Co-chaperone protein HscB homolog</fullName>
    </recommendedName>
</protein>
<sequence>MNYFELFSLSPSFELDTAVLSERYRELQRAVHPDKFANASEQDKRLAVQHTAQVNDGYNTLKHPISRAEHMLSLKGIDLSHESTTVKDTMFLMQQMEWREALEEISDCDDPDEAIEHLHQSFGEYRGDITAQLAQKIGSEEASVLEQAADLVRKLKFMDKLQAELERAEDALF</sequence>
<reference key="1">
    <citation type="submission" date="2007-03" db="EMBL/GenBank/DDBJ databases">
        <title>Complete sequence of Shewanella loihica PV-4.</title>
        <authorList>
            <consortium name="US DOE Joint Genome Institute"/>
            <person name="Copeland A."/>
            <person name="Lucas S."/>
            <person name="Lapidus A."/>
            <person name="Barry K."/>
            <person name="Detter J.C."/>
            <person name="Glavina del Rio T."/>
            <person name="Hammon N."/>
            <person name="Israni S."/>
            <person name="Dalin E."/>
            <person name="Tice H."/>
            <person name="Pitluck S."/>
            <person name="Chain P."/>
            <person name="Malfatti S."/>
            <person name="Shin M."/>
            <person name="Vergez L."/>
            <person name="Schmutz J."/>
            <person name="Larimer F."/>
            <person name="Land M."/>
            <person name="Hauser L."/>
            <person name="Kyrpides N."/>
            <person name="Mikhailova N."/>
            <person name="Romine M.F."/>
            <person name="Serres G."/>
            <person name="Fredrickson J."/>
            <person name="Tiedje J."/>
            <person name="Richardson P."/>
        </authorList>
    </citation>
    <scope>NUCLEOTIDE SEQUENCE [LARGE SCALE GENOMIC DNA]</scope>
    <source>
        <strain>ATCC BAA-1088 / PV-4</strain>
    </source>
</reference>
<proteinExistence type="inferred from homology"/>
<organism>
    <name type="scientific">Shewanella loihica (strain ATCC BAA-1088 / PV-4)</name>
    <dbReference type="NCBI Taxonomy" id="323850"/>
    <lineage>
        <taxon>Bacteria</taxon>
        <taxon>Pseudomonadati</taxon>
        <taxon>Pseudomonadota</taxon>
        <taxon>Gammaproteobacteria</taxon>
        <taxon>Alteromonadales</taxon>
        <taxon>Shewanellaceae</taxon>
        <taxon>Shewanella</taxon>
    </lineage>
</organism>
<name>HSCB_SHELP</name>
<keyword id="KW-0143">Chaperone</keyword>
<keyword id="KW-1185">Reference proteome</keyword>
<comment type="function">
    <text evidence="1">Co-chaperone involved in the maturation of iron-sulfur cluster-containing proteins. Seems to help targeting proteins to be folded toward HscA.</text>
</comment>
<comment type="subunit">
    <text evidence="1">Interacts with HscA and stimulates its ATPase activity.</text>
</comment>
<comment type="similarity">
    <text evidence="1">Belongs to the HscB family.</text>
</comment>